<gene>
    <name evidence="1" type="primary">rpsT</name>
    <name evidence="1" type="synonym">rps20</name>
    <name type="ordered locus">UU310</name>
</gene>
<name>RS20_UREPA</name>
<sequence>MANIVSNEKTYRHTQKVRKENHAKMSKLRTIVKKTRSSNEQAQLNEAYKVIDTTASKGVIHKNKANRLKSRTAKAFKTNLEVTA</sequence>
<keyword id="KW-1185">Reference proteome</keyword>
<keyword id="KW-0687">Ribonucleoprotein</keyword>
<keyword id="KW-0689">Ribosomal protein</keyword>
<keyword id="KW-0694">RNA-binding</keyword>
<keyword id="KW-0699">rRNA-binding</keyword>
<feature type="chain" id="PRO_0000168055" description="Small ribosomal subunit protein bS20">
    <location>
        <begin position="1"/>
        <end position="84"/>
    </location>
</feature>
<feature type="region of interest" description="Disordered" evidence="2">
    <location>
        <begin position="1"/>
        <end position="25"/>
    </location>
</feature>
<accession>Q9PQI1</accession>
<protein>
    <recommendedName>
        <fullName evidence="1">Small ribosomal subunit protein bS20</fullName>
    </recommendedName>
    <alternativeName>
        <fullName evidence="3">30S ribosomal protein S20</fullName>
    </alternativeName>
</protein>
<dbReference type="EMBL" id="AF222894">
    <property type="protein sequence ID" value="AAF30719.1"/>
    <property type="molecule type" value="Genomic_DNA"/>
</dbReference>
<dbReference type="RefSeq" id="WP_006688746.1">
    <property type="nucleotide sequence ID" value="NC_002162.1"/>
</dbReference>
<dbReference type="SMR" id="Q9PQI1"/>
<dbReference type="STRING" id="273119.UU310"/>
<dbReference type="EnsemblBacteria" id="AAF30719">
    <property type="protein sequence ID" value="AAF30719"/>
    <property type="gene ID" value="UU310"/>
</dbReference>
<dbReference type="GeneID" id="29672499"/>
<dbReference type="KEGG" id="uur:UU310"/>
<dbReference type="eggNOG" id="COG0268">
    <property type="taxonomic scope" value="Bacteria"/>
</dbReference>
<dbReference type="HOGENOM" id="CLU_160655_1_0_14"/>
<dbReference type="OrthoDB" id="404032at2"/>
<dbReference type="Proteomes" id="UP000000423">
    <property type="component" value="Chromosome"/>
</dbReference>
<dbReference type="GO" id="GO:0005829">
    <property type="term" value="C:cytosol"/>
    <property type="evidence" value="ECO:0007669"/>
    <property type="project" value="TreeGrafter"/>
</dbReference>
<dbReference type="GO" id="GO:0015935">
    <property type="term" value="C:small ribosomal subunit"/>
    <property type="evidence" value="ECO:0007669"/>
    <property type="project" value="TreeGrafter"/>
</dbReference>
<dbReference type="GO" id="GO:0070181">
    <property type="term" value="F:small ribosomal subunit rRNA binding"/>
    <property type="evidence" value="ECO:0007669"/>
    <property type="project" value="TreeGrafter"/>
</dbReference>
<dbReference type="GO" id="GO:0003735">
    <property type="term" value="F:structural constituent of ribosome"/>
    <property type="evidence" value="ECO:0007669"/>
    <property type="project" value="InterPro"/>
</dbReference>
<dbReference type="GO" id="GO:0006412">
    <property type="term" value="P:translation"/>
    <property type="evidence" value="ECO:0007669"/>
    <property type="project" value="UniProtKB-UniRule"/>
</dbReference>
<dbReference type="Gene3D" id="1.20.58.110">
    <property type="entry name" value="Ribosomal protein S20"/>
    <property type="match status" value="1"/>
</dbReference>
<dbReference type="HAMAP" id="MF_00500">
    <property type="entry name" value="Ribosomal_bS20"/>
    <property type="match status" value="1"/>
</dbReference>
<dbReference type="InterPro" id="IPR002583">
    <property type="entry name" value="Ribosomal_bS20"/>
</dbReference>
<dbReference type="InterPro" id="IPR036510">
    <property type="entry name" value="Ribosomal_bS20_sf"/>
</dbReference>
<dbReference type="NCBIfam" id="TIGR00029">
    <property type="entry name" value="S20"/>
    <property type="match status" value="1"/>
</dbReference>
<dbReference type="PANTHER" id="PTHR33398">
    <property type="entry name" value="30S RIBOSOMAL PROTEIN S20"/>
    <property type="match status" value="1"/>
</dbReference>
<dbReference type="PANTHER" id="PTHR33398:SF1">
    <property type="entry name" value="SMALL RIBOSOMAL SUBUNIT PROTEIN BS20C"/>
    <property type="match status" value="1"/>
</dbReference>
<dbReference type="Pfam" id="PF01649">
    <property type="entry name" value="Ribosomal_S20p"/>
    <property type="match status" value="1"/>
</dbReference>
<dbReference type="SUPFAM" id="SSF46992">
    <property type="entry name" value="Ribosomal protein S20"/>
    <property type="match status" value="1"/>
</dbReference>
<evidence type="ECO:0000255" key="1">
    <source>
        <dbReference type="HAMAP-Rule" id="MF_00500"/>
    </source>
</evidence>
<evidence type="ECO:0000256" key="2">
    <source>
        <dbReference type="SAM" id="MobiDB-lite"/>
    </source>
</evidence>
<evidence type="ECO:0000305" key="3"/>
<reference key="1">
    <citation type="journal article" date="2000" name="Nature">
        <title>The complete sequence of the mucosal pathogen Ureaplasma urealyticum.</title>
        <authorList>
            <person name="Glass J.I."/>
            <person name="Lefkowitz E.J."/>
            <person name="Glass J.S."/>
            <person name="Heiner C.R."/>
            <person name="Chen E.Y."/>
            <person name="Cassell G.H."/>
        </authorList>
    </citation>
    <scope>NUCLEOTIDE SEQUENCE [LARGE SCALE GENOMIC DNA]</scope>
    <source>
        <strain>ATCC 700970</strain>
    </source>
</reference>
<proteinExistence type="inferred from homology"/>
<organism>
    <name type="scientific">Ureaplasma parvum serovar 3 (strain ATCC 700970)</name>
    <dbReference type="NCBI Taxonomy" id="273119"/>
    <lineage>
        <taxon>Bacteria</taxon>
        <taxon>Bacillati</taxon>
        <taxon>Mycoplasmatota</taxon>
        <taxon>Mycoplasmoidales</taxon>
        <taxon>Mycoplasmoidaceae</taxon>
        <taxon>Ureaplasma</taxon>
    </lineage>
</organism>
<comment type="function">
    <text evidence="1">Binds directly to 16S ribosomal RNA.</text>
</comment>
<comment type="similarity">
    <text evidence="1">Belongs to the bacterial ribosomal protein bS20 family.</text>
</comment>